<organism>
    <name type="scientific">Cuscuta reflexa</name>
    <name type="common">Southern Asian dodder</name>
    <dbReference type="NCBI Taxonomy" id="4129"/>
    <lineage>
        <taxon>Eukaryota</taxon>
        <taxon>Viridiplantae</taxon>
        <taxon>Streptophyta</taxon>
        <taxon>Embryophyta</taxon>
        <taxon>Tracheophyta</taxon>
        <taxon>Spermatophyta</taxon>
        <taxon>Magnoliopsida</taxon>
        <taxon>eudicotyledons</taxon>
        <taxon>Gunneridae</taxon>
        <taxon>Pentapetalae</taxon>
        <taxon>asterids</taxon>
        <taxon>lamiids</taxon>
        <taxon>Solanales</taxon>
        <taxon>Convolvulaceae</taxon>
        <taxon>Cuscuteae</taxon>
        <taxon>Cuscuta</taxon>
        <taxon>Cuscuta subgen. Monogynella</taxon>
    </lineage>
</organism>
<comment type="function">
    <text evidence="2">May help in the organization of the PsaE and PsaF subunits.</text>
</comment>
<comment type="subcellular location">
    <subcellularLocation>
        <location evidence="1">Plastid membrane</location>
        <topology evidence="2">Single-pass membrane protein</topology>
    </subcellularLocation>
</comment>
<comment type="similarity">
    <text evidence="2">Belongs to the PsaJ family.</text>
</comment>
<comment type="caution">
    <text evidence="3">Young tissue from this organism is photosynthetic and contains some thylakoids, although the photosynthetic activity does not exceed the light compensation point.</text>
</comment>
<feature type="chain" id="PRO_0000354143" description="Photosystem I reaction center subunit IX">
    <location>
        <begin position="1"/>
        <end position="42"/>
    </location>
</feature>
<feature type="transmembrane region" description="Helical" evidence="2">
    <location>
        <begin position="7"/>
        <end position="27"/>
    </location>
</feature>
<keyword id="KW-0472">Membrane</keyword>
<keyword id="KW-0602">Photosynthesis</keyword>
<keyword id="KW-0603">Photosystem I</keyword>
<keyword id="KW-0934">Plastid</keyword>
<keyword id="KW-0812">Transmembrane</keyword>
<keyword id="KW-1133">Transmembrane helix</keyword>
<proteinExistence type="inferred from homology"/>
<geneLocation type="plastid"/>
<name>PSAJ_CUSRE</name>
<evidence type="ECO:0000250" key="1"/>
<evidence type="ECO:0000255" key="2">
    <source>
        <dbReference type="HAMAP-Rule" id="MF_00522"/>
    </source>
</evidence>
<evidence type="ECO:0000305" key="3"/>
<accession>A7M983</accession>
<reference key="1">
    <citation type="journal article" date="2007" name="BMC Plant Biol.">
        <title>Complete DNA sequences of the plastid genomes of two parasitic flowering plant species, Cuscuta reflexa and Cuscuta gronovii.</title>
        <authorList>
            <person name="Funk H.T."/>
            <person name="Berg S."/>
            <person name="Krupinska K."/>
            <person name="Maier U.-G."/>
            <person name="Krause K."/>
        </authorList>
    </citation>
    <scope>NUCLEOTIDE SEQUENCE [LARGE SCALE GENOMIC DNA]</scope>
</reference>
<protein>
    <recommendedName>
        <fullName evidence="2">Photosystem I reaction center subunit IX</fullName>
    </recommendedName>
    <alternativeName>
        <fullName evidence="2">PSI-J</fullName>
    </alternativeName>
</protein>
<dbReference type="EMBL" id="AM711640">
    <property type="protein sequence ID" value="CAM98411.1"/>
    <property type="molecule type" value="Genomic_DNA"/>
</dbReference>
<dbReference type="RefSeq" id="YP_001430125.1">
    <property type="nucleotide sequence ID" value="NC_009766.1"/>
</dbReference>
<dbReference type="SMR" id="A7M983"/>
<dbReference type="GeneID" id="5536646"/>
<dbReference type="GO" id="GO:0009522">
    <property type="term" value="C:photosystem I"/>
    <property type="evidence" value="ECO:0007669"/>
    <property type="project" value="UniProtKB-KW"/>
</dbReference>
<dbReference type="GO" id="GO:0042170">
    <property type="term" value="C:plastid membrane"/>
    <property type="evidence" value="ECO:0007669"/>
    <property type="project" value="UniProtKB-SubCell"/>
</dbReference>
<dbReference type="GO" id="GO:0042651">
    <property type="term" value="C:thylakoid membrane"/>
    <property type="evidence" value="ECO:0007669"/>
    <property type="project" value="UniProtKB-UniRule"/>
</dbReference>
<dbReference type="GO" id="GO:0015979">
    <property type="term" value="P:photosynthesis"/>
    <property type="evidence" value="ECO:0007669"/>
    <property type="project" value="UniProtKB-UniRule"/>
</dbReference>
<dbReference type="Gene3D" id="1.20.5.510">
    <property type="entry name" value="Single helix bin"/>
    <property type="match status" value="1"/>
</dbReference>
<dbReference type="HAMAP" id="MF_00522">
    <property type="entry name" value="PSI_PsaJ"/>
    <property type="match status" value="1"/>
</dbReference>
<dbReference type="InterPro" id="IPR002615">
    <property type="entry name" value="PSI_PsaJ"/>
</dbReference>
<dbReference type="InterPro" id="IPR036062">
    <property type="entry name" value="PSI_PsaJ_sf"/>
</dbReference>
<dbReference type="PANTHER" id="PTHR36082">
    <property type="match status" value="1"/>
</dbReference>
<dbReference type="PANTHER" id="PTHR36082:SF2">
    <property type="entry name" value="PHOTOSYSTEM I REACTION CENTER SUBUNIT IX"/>
    <property type="match status" value="1"/>
</dbReference>
<dbReference type="Pfam" id="PF01701">
    <property type="entry name" value="PSI_PsaJ"/>
    <property type="match status" value="1"/>
</dbReference>
<dbReference type="SUPFAM" id="SSF81544">
    <property type="entry name" value="Subunit IX of photosystem I reaction centre, PsaJ"/>
    <property type="match status" value="1"/>
</dbReference>
<sequence>MRYFKTYLSAAPVLSTLWLGALAALLIEINRFFPDALTFPFF</sequence>
<gene>
    <name evidence="2" type="primary">psaJ</name>
</gene>